<sequence length="344" mass="35895">MSKDVRQLLDKTYGGNPLSREEAKCLFASLVRGELDEVTIAALLMALKVRGETIDEISGAADAMREAANSFPRPALDGGILDIVGTGGDGFNTINISTTATFVAAAAGANVAKHGNRSVSSKSGSSDLLGQFGIELTMAPQTAANCLEALGICFLFAPHYHGGVKHAVPVRQKLATRTLFNVLGPLINPSHPDFMLLGVYSETLVRPIAEVLCALGVKRAMVVHGEGLDEVALHGTTQVCELRNGELVDYSLSPKDFGLEPVQVTELEGGSPEDNALITAAILKGEGKAAHRDAVALNAGCALYVAGLADTPQAGFKLAIDTLASGKAYEKLIGLAAMSQQDKA</sequence>
<reference key="1">
    <citation type="submission" date="2006-12" db="EMBL/GenBank/DDBJ databases">
        <title>Complete sequence of Shewanella amazonensis SB2B.</title>
        <authorList>
            <consortium name="US DOE Joint Genome Institute"/>
            <person name="Copeland A."/>
            <person name="Lucas S."/>
            <person name="Lapidus A."/>
            <person name="Barry K."/>
            <person name="Detter J.C."/>
            <person name="Glavina del Rio T."/>
            <person name="Hammon N."/>
            <person name="Israni S."/>
            <person name="Dalin E."/>
            <person name="Tice H."/>
            <person name="Pitluck S."/>
            <person name="Munk A.C."/>
            <person name="Brettin T."/>
            <person name="Bruce D."/>
            <person name="Han C."/>
            <person name="Tapia R."/>
            <person name="Gilna P."/>
            <person name="Schmutz J."/>
            <person name="Larimer F."/>
            <person name="Land M."/>
            <person name="Hauser L."/>
            <person name="Kyrpides N."/>
            <person name="Mikhailova N."/>
            <person name="Fredrickson J."/>
            <person name="Richardson P."/>
        </authorList>
    </citation>
    <scope>NUCLEOTIDE SEQUENCE [LARGE SCALE GENOMIC DNA]</scope>
    <source>
        <strain>ATCC BAA-1098 / SB2B</strain>
    </source>
</reference>
<evidence type="ECO:0000255" key="1">
    <source>
        <dbReference type="HAMAP-Rule" id="MF_00211"/>
    </source>
</evidence>
<protein>
    <recommendedName>
        <fullName evidence="1">Anthranilate phosphoribosyltransferase</fullName>
        <ecNumber evidence="1">2.4.2.18</ecNumber>
    </recommendedName>
</protein>
<organism>
    <name type="scientific">Shewanella amazonensis (strain ATCC BAA-1098 / SB2B)</name>
    <dbReference type="NCBI Taxonomy" id="326297"/>
    <lineage>
        <taxon>Bacteria</taxon>
        <taxon>Pseudomonadati</taxon>
        <taxon>Pseudomonadota</taxon>
        <taxon>Gammaproteobacteria</taxon>
        <taxon>Alteromonadales</taxon>
        <taxon>Shewanellaceae</taxon>
        <taxon>Shewanella</taxon>
    </lineage>
</organism>
<name>TRPD_SHEAM</name>
<feature type="chain" id="PRO_0000325462" description="Anthranilate phosphoribosyltransferase">
    <location>
        <begin position="1"/>
        <end position="344"/>
    </location>
</feature>
<feature type="binding site" evidence="1">
    <location>
        <position position="85"/>
    </location>
    <ligand>
        <name>5-phospho-alpha-D-ribose 1-diphosphate</name>
        <dbReference type="ChEBI" id="CHEBI:58017"/>
    </ligand>
</feature>
<feature type="binding site" evidence="1">
    <location>
        <position position="85"/>
    </location>
    <ligand>
        <name>anthranilate</name>
        <dbReference type="ChEBI" id="CHEBI:16567"/>
        <label>1</label>
    </ligand>
</feature>
<feature type="binding site" evidence="1">
    <location>
        <begin position="88"/>
        <end position="89"/>
    </location>
    <ligand>
        <name>5-phospho-alpha-D-ribose 1-diphosphate</name>
        <dbReference type="ChEBI" id="CHEBI:58017"/>
    </ligand>
</feature>
<feature type="binding site" evidence="1">
    <location>
        <position position="93"/>
    </location>
    <ligand>
        <name>5-phospho-alpha-D-ribose 1-diphosphate</name>
        <dbReference type="ChEBI" id="CHEBI:58017"/>
    </ligand>
</feature>
<feature type="binding site" evidence="1">
    <location>
        <begin position="95"/>
        <end position="98"/>
    </location>
    <ligand>
        <name>5-phospho-alpha-D-ribose 1-diphosphate</name>
        <dbReference type="ChEBI" id="CHEBI:58017"/>
    </ligand>
</feature>
<feature type="binding site" evidence="1">
    <location>
        <position position="97"/>
    </location>
    <ligand>
        <name>Mg(2+)</name>
        <dbReference type="ChEBI" id="CHEBI:18420"/>
        <label>1</label>
    </ligand>
</feature>
<feature type="binding site" evidence="1">
    <location>
        <begin position="113"/>
        <end position="121"/>
    </location>
    <ligand>
        <name>5-phospho-alpha-D-ribose 1-diphosphate</name>
        <dbReference type="ChEBI" id="CHEBI:58017"/>
    </ligand>
</feature>
<feature type="binding site" evidence="1">
    <location>
        <position position="116"/>
    </location>
    <ligand>
        <name>anthranilate</name>
        <dbReference type="ChEBI" id="CHEBI:16567"/>
        <label>1</label>
    </ligand>
</feature>
<feature type="binding site" evidence="1">
    <location>
        <position position="125"/>
    </location>
    <ligand>
        <name>5-phospho-alpha-D-ribose 1-diphosphate</name>
        <dbReference type="ChEBI" id="CHEBI:58017"/>
    </ligand>
</feature>
<feature type="binding site" evidence="1">
    <location>
        <position position="171"/>
    </location>
    <ligand>
        <name>anthranilate</name>
        <dbReference type="ChEBI" id="CHEBI:16567"/>
        <label>2</label>
    </ligand>
</feature>
<feature type="binding site" evidence="1">
    <location>
        <position position="229"/>
    </location>
    <ligand>
        <name>Mg(2+)</name>
        <dbReference type="ChEBI" id="CHEBI:18420"/>
        <label>2</label>
    </ligand>
</feature>
<feature type="binding site" evidence="1">
    <location>
        <position position="230"/>
    </location>
    <ligand>
        <name>Mg(2+)</name>
        <dbReference type="ChEBI" id="CHEBI:18420"/>
        <label>1</label>
    </ligand>
</feature>
<feature type="binding site" evidence="1">
    <location>
        <position position="230"/>
    </location>
    <ligand>
        <name>Mg(2+)</name>
        <dbReference type="ChEBI" id="CHEBI:18420"/>
        <label>2</label>
    </ligand>
</feature>
<gene>
    <name evidence="1" type="primary">trpD</name>
    <name type="ordered locus">Sama_2131</name>
</gene>
<keyword id="KW-0028">Amino-acid biosynthesis</keyword>
<keyword id="KW-0057">Aromatic amino acid biosynthesis</keyword>
<keyword id="KW-0328">Glycosyltransferase</keyword>
<keyword id="KW-0460">Magnesium</keyword>
<keyword id="KW-0479">Metal-binding</keyword>
<keyword id="KW-1185">Reference proteome</keyword>
<keyword id="KW-0808">Transferase</keyword>
<keyword id="KW-0822">Tryptophan biosynthesis</keyword>
<accession>A1S7I0</accession>
<dbReference type="EC" id="2.4.2.18" evidence="1"/>
<dbReference type="EMBL" id="CP000507">
    <property type="protein sequence ID" value="ABM00337.1"/>
    <property type="molecule type" value="Genomic_DNA"/>
</dbReference>
<dbReference type="RefSeq" id="WP_011760244.1">
    <property type="nucleotide sequence ID" value="NC_008700.1"/>
</dbReference>
<dbReference type="SMR" id="A1S7I0"/>
<dbReference type="STRING" id="326297.Sama_2131"/>
<dbReference type="KEGG" id="saz:Sama_2131"/>
<dbReference type="eggNOG" id="COG0547">
    <property type="taxonomic scope" value="Bacteria"/>
</dbReference>
<dbReference type="HOGENOM" id="CLU_034315_2_1_6"/>
<dbReference type="OrthoDB" id="9806430at2"/>
<dbReference type="UniPathway" id="UPA00035">
    <property type="reaction ID" value="UER00041"/>
</dbReference>
<dbReference type="Proteomes" id="UP000009175">
    <property type="component" value="Chromosome"/>
</dbReference>
<dbReference type="GO" id="GO:0005829">
    <property type="term" value="C:cytosol"/>
    <property type="evidence" value="ECO:0007669"/>
    <property type="project" value="TreeGrafter"/>
</dbReference>
<dbReference type="GO" id="GO:0004048">
    <property type="term" value="F:anthranilate phosphoribosyltransferase activity"/>
    <property type="evidence" value="ECO:0007669"/>
    <property type="project" value="UniProtKB-UniRule"/>
</dbReference>
<dbReference type="GO" id="GO:0000287">
    <property type="term" value="F:magnesium ion binding"/>
    <property type="evidence" value="ECO:0007669"/>
    <property type="project" value="UniProtKB-UniRule"/>
</dbReference>
<dbReference type="GO" id="GO:0000162">
    <property type="term" value="P:L-tryptophan biosynthetic process"/>
    <property type="evidence" value="ECO:0007669"/>
    <property type="project" value="UniProtKB-UniRule"/>
</dbReference>
<dbReference type="FunFam" id="3.40.1030.10:FF:000002">
    <property type="entry name" value="Anthranilate phosphoribosyltransferase"/>
    <property type="match status" value="1"/>
</dbReference>
<dbReference type="Gene3D" id="3.40.1030.10">
    <property type="entry name" value="Nucleoside phosphorylase/phosphoribosyltransferase catalytic domain"/>
    <property type="match status" value="1"/>
</dbReference>
<dbReference type="Gene3D" id="1.20.970.10">
    <property type="entry name" value="Transferase, Pyrimidine Nucleoside Phosphorylase, Chain C"/>
    <property type="match status" value="1"/>
</dbReference>
<dbReference type="HAMAP" id="MF_00211">
    <property type="entry name" value="TrpD"/>
    <property type="match status" value="1"/>
</dbReference>
<dbReference type="InterPro" id="IPR005940">
    <property type="entry name" value="Anthranilate_Pribosyl_Tfrase"/>
</dbReference>
<dbReference type="InterPro" id="IPR000312">
    <property type="entry name" value="Glycosyl_Trfase_fam3"/>
</dbReference>
<dbReference type="InterPro" id="IPR017459">
    <property type="entry name" value="Glycosyl_Trfase_fam3_N_dom"/>
</dbReference>
<dbReference type="InterPro" id="IPR036320">
    <property type="entry name" value="Glycosyl_Trfase_fam3_N_dom_sf"/>
</dbReference>
<dbReference type="InterPro" id="IPR035902">
    <property type="entry name" value="Nuc_phospho_transferase"/>
</dbReference>
<dbReference type="NCBIfam" id="TIGR01245">
    <property type="entry name" value="trpD"/>
    <property type="match status" value="1"/>
</dbReference>
<dbReference type="PANTHER" id="PTHR43285">
    <property type="entry name" value="ANTHRANILATE PHOSPHORIBOSYLTRANSFERASE"/>
    <property type="match status" value="1"/>
</dbReference>
<dbReference type="PANTHER" id="PTHR43285:SF2">
    <property type="entry name" value="ANTHRANILATE PHOSPHORIBOSYLTRANSFERASE"/>
    <property type="match status" value="1"/>
</dbReference>
<dbReference type="Pfam" id="PF02885">
    <property type="entry name" value="Glycos_trans_3N"/>
    <property type="match status" value="1"/>
</dbReference>
<dbReference type="Pfam" id="PF00591">
    <property type="entry name" value="Glycos_transf_3"/>
    <property type="match status" value="1"/>
</dbReference>
<dbReference type="SUPFAM" id="SSF52418">
    <property type="entry name" value="Nucleoside phosphorylase/phosphoribosyltransferase catalytic domain"/>
    <property type="match status" value="1"/>
</dbReference>
<dbReference type="SUPFAM" id="SSF47648">
    <property type="entry name" value="Nucleoside phosphorylase/phosphoribosyltransferase N-terminal domain"/>
    <property type="match status" value="1"/>
</dbReference>
<proteinExistence type="inferred from homology"/>
<comment type="function">
    <text evidence="1">Catalyzes the transfer of the phosphoribosyl group of 5-phosphorylribose-1-pyrophosphate (PRPP) to anthranilate to yield N-(5'-phosphoribosyl)-anthranilate (PRA).</text>
</comment>
<comment type="catalytic activity">
    <reaction evidence="1">
        <text>N-(5-phospho-beta-D-ribosyl)anthranilate + diphosphate = 5-phospho-alpha-D-ribose 1-diphosphate + anthranilate</text>
        <dbReference type="Rhea" id="RHEA:11768"/>
        <dbReference type="ChEBI" id="CHEBI:16567"/>
        <dbReference type="ChEBI" id="CHEBI:18277"/>
        <dbReference type="ChEBI" id="CHEBI:33019"/>
        <dbReference type="ChEBI" id="CHEBI:58017"/>
        <dbReference type="EC" id="2.4.2.18"/>
    </reaction>
</comment>
<comment type="cofactor">
    <cofactor evidence="1">
        <name>Mg(2+)</name>
        <dbReference type="ChEBI" id="CHEBI:18420"/>
    </cofactor>
    <text evidence="1">Binds 2 magnesium ions per monomer.</text>
</comment>
<comment type="pathway">
    <text evidence="1">Amino-acid biosynthesis; L-tryptophan biosynthesis; L-tryptophan from chorismate: step 2/5.</text>
</comment>
<comment type="subunit">
    <text evidence="1">Homodimer.</text>
</comment>
<comment type="similarity">
    <text evidence="1">Belongs to the anthranilate phosphoribosyltransferase family.</text>
</comment>